<sequence length="410" mass="48492">MENHLGENHRRCTLQKRNVTRELKKGKHTMYALKRVKKIYIRVHEITQIDNQTYQCLEREQNFCENLARMCERTYTEEKPYRCDMCEKTFIQSSDLISHQRIHNYEKPYKCSKCEKSFWHHLALSGHQRTHAGKKFYTCDICGKNFGQSSDLLVHQRSHTGEKPYLCNECDKCFSRSTNLIRHRRTHTGEKPFKCLECEKAFSGKSDLISHQRTHTGERPYKCNKCEKSYRHRSAFIVHKRVHTGEKPYKCGACEKCFGQKSDLIVHQRVHTGEKPYKCLECMRSFTRSANLIRHQATHTHTFKCLEYEKSFNCSSDFIVHQRIHMEEKPHQWSMCESDFLLGMDFVAQQKMRAQTEELHYKYSVCDKTFHHSSALLQHQTVHIDDEYICNMSEKGLDLSSHASETSRVS</sequence>
<reference key="1">
    <citation type="journal article" date="2005" name="Science">
        <title>The transcriptional landscape of the mammalian genome.</title>
        <authorList>
            <person name="Carninci P."/>
            <person name="Kasukawa T."/>
            <person name="Katayama S."/>
            <person name="Gough J."/>
            <person name="Frith M.C."/>
            <person name="Maeda N."/>
            <person name="Oyama R."/>
            <person name="Ravasi T."/>
            <person name="Lenhard B."/>
            <person name="Wells C."/>
            <person name="Kodzius R."/>
            <person name="Shimokawa K."/>
            <person name="Bajic V.B."/>
            <person name="Brenner S.E."/>
            <person name="Batalov S."/>
            <person name="Forrest A.R."/>
            <person name="Zavolan M."/>
            <person name="Davis M.J."/>
            <person name="Wilming L.G."/>
            <person name="Aidinis V."/>
            <person name="Allen J.E."/>
            <person name="Ambesi-Impiombato A."/>
            <person name="Apweiler R."/>
            <person name="Aturaliya R.N."/>
            <person name="Bailey T.L."/>
            <person name="Bansal M."/>
            <person name="Baxter L."/>
            <person name="Beisel K.W."/>
            <person name="Bersano T."/>
            <person name="Bono H."/>
            <person name="Chalk A.M."/>
            <person name="Chiu K.P."/>
            <person name="Choudhary V."/>
            <person name="Christoffels A."/>
            <person name="Clutterbuck D.R."/>
            <person name="Crowe M.L."/>
            <person name="Dalla E."/>
            <person name="Dalrymple B.P."/>
            <person name="de Bono B."/>
            <person name="Della Gatta G."/>
            <person name="di Bernardo D."/>
            <person name="Down T."/>
            <person name="Engstrom P."/>
            <person name="Fagiolini M."/>
            <person name="Faulkner G."/>
            <person name="Fletcher C.F."/>
            <person name="Fukushima T."/>
            <person name="Furuno M."/>
            <person name="Futaki S."/>
            <person name="Gariboldi M."/>
            <person name="Georgii-Hemming P."/>
            <person name="Gingeras T.R."/>
            <person name="Gojobori T."/>
            <person name="Green R.E."/>
            <person name="Gustincich S."/>
            <person name="Harbers M."/>
            <person name="Hayashi Y."/>
            <person name="Hensch T.K."/>
            <person name="Hirokawa N."/>
            <person name="Hill D."/>
            <person name="Huminiecki L."/>
            <person name="Iacono M."/>
            <person name="Ikeo K."/>
            <person name="Iwama A."/>
            <person name="Ishikawa T."/>
            <person name="Jakt M."/>
            <person name="Kanapin A."/>
            <person name="Katoh M."/>
            <person name="Kawasawa Y."/>
            <person name="Kelso J."/>
            <person name="Kitamura H."/>
            <person name="Kitano H."/>
            <person name="Kollias G."/>
            <person name="Krishnan S.P."/>
            <person name="Kruger A."/>
            <person name="Kummerfeld S.K."/>
            <person name="Kurochkin I.V."/>
            <person name="Lareau L.F."/>
            <person name="Lazarevic D."/>
            <person name="Lipovich L."/>
            <person name="Liu J."/>
            <person name="Liuni S."/>
            <person name="McWilliam S."/>
            <person name="Madan Babu M."/>
            <person name="Madera M."/>
            <person name="Marchionni L."/>
            <person name="Matsuda H."/>
            <person name="Matsuzawa S."/>
            <person name="Miki H."/>
            <person name="Mignone F."/>
            <person name="Miyake S."/>
            <person name="Morris K."/>
            <person name="Mottagui-Tabar S."/>
            <person name="Mulder N."/>
            <person name="Nakano N."/>
            <person name="Nakauchi H."/>
            <person name="Ng P."/>
            <person name="Nilsson R."/>
            <person name="Nishiguchi S."/>
            <person name="Nishikawa S."/>
            <person name="Nori F."/>
            <person name="Ohara O."/>
            <person name="Okazaki Y."/>
            <person name="Orlando V."/>
            <person name="Pang K.C."/>
            <person name="Pavan W.J."/>
            <person name="Pavesi G."/>
            <person name="Pesole G."/>
            <person name="Petrovsky N."/>
            <person name="Piazza S."/>
            <person name="Reed J."/>
            <person name="Reid J.F."/>
            <person name="Ring B.Z."/>
            <person name="Ringwald M."/>
            <person name="Rost B."/>
            <person name="Ruan Y."/>
            <person name="Salzberg S.L."/>
            <person name="Sandelin A."/>
            <person name="Schneider C."/>
            <person name="Schoenbach C."/>
            <person name="Sekiguchi K."/>
            <person name="Semple C.A."/>
            <person name="Seno S."/>
            <person name="Sessa L."/>
            <person name="Sheng Y."/>
            <person name="Shibata Y."/>
            <person name="Shimada H."/>
            <person name="Shimada K."/>
            <person name="Silva D."/>
            <person name="Sinclair B."/>
            <person name="Sperling S."/>
            <person name="Stupka E."/>
            <person name="Sugiura K."/>
            <person name="Sultana R."/>
            <person name="Takenaka Y."/>
            <person name="Taki K."/>
            <person name="Tammoja K."/>
            <person name="Tan S.L."/>
            <person name="Tang S."/>
            <person name="Taylor M.S."/>
            <person name="Tegner J."/>
            <person name="Teichmann S.A."/>
            <person name="Ueda H.R."/>
            <person name="van Nimwegen E."/>
            <person name="Verardo R."/>
            <person name="Wei C.L."/>
            <person name="Yagi K."/>
            <person name="Yamanishi H."/>
            <person name="Zabarovsky E."/>
            <person name="Zhu S."/>
            <person name="Zimmer A."/>
            <person name="Hide W."/>
            <person name="Bult C."/>
            <person name="Grimmond S.M."/>
            <person name="Teasdale R.D."/>
            <person name="Liu E.T."/>
            <person name="Brusic V."/>
            <person name="Quackenbush J."/>
            <person name="Wahlestedt C."/>
            <person name="Mattick J.S."/>
            <person name="Hume D.A."/>
            <person name="Kai C."/>
            <person name="Sasaki D."/>
            <person name="Tomaru Y."/>
            <person name="Fukuda S."/>
            <person name="Kanamori-Katayama M."/>
            <person name="Suzuki M."/>
            <person name="Aoki J."/>
            <person name="Arakawa T."/>
            <person name="Iida J."/>
            <person name="Imamura K."/>
            <person name="Itoh M."/>
            <person name="Kato T."/>
            <person name="Kawaji H."/>
            <person name="Kawagashira N."/>
            <person name="Kawashima T."/>
            <person name="Kojima M."/>
            <person name="Kondo S."/>
            <person name="Konno H."/>
            <person name="Nakano K."/>
            <person name="Ninomiya N."/>
            <person name="Nishio T."/>
            <person name="Okada M."/>
            <person name="Plessy C."/>
            <person name="Shibata K."/>
            <person name="Shiraki T."/>
            <person name="Suzuki S."/>
            <person name="Tagami M."/>
            <person name="Waki K."/>
            <person name="Watahiki A."/>
            <person name="Okamura-Oho Y."/>
            <person name="Suzuki H."/>
            <person name="Kawai J."/>
            <person name="Hayashizaki Y."/>
        </authorList>
    </citation>
    <scope>NUCLEOTIDE SEQUENCE [LARGE SCALE MRNA]</scope>
    <source>
        <strain>C57BL/6J</strain>
        <strain>NOD</strain>
        <tissue>Cerebellum</tissue>
    </source>
</reference>
<reference key="2">
    <citation type="journal article" date="2009" name="PLoS Biol.">
        <title>Lineage-specific biology revealed by a finished genome assembly of the mouse.</title>
        <authorList>
            <person name="Church D.M."/>
            <person name="Goodstadt L."/>
            <person name="Hillier L.W."/>
            <person name="Zody M.C."/>
            <person name="Goldstein S."/>
            <person name="She X."/>
            <person name="Bult C.J."/>
            <person name="Agarwala R."/>
            <person name="Cherry J.L."/>
            <person name="DiCuccio M."/>
            <person name="Hlavina W."/>
            <person name="Kapustin Y."/>
            <person name="Meric P."/>
            <person name="Maglott D."/>
            <person name="Birtle Z."/>
            <person name="Marques A.C."/>
            <person name="Graves T."/>
            <person name="Zhou S."/>
            <person name="Teague B."/>
            <person name="Potamousis K."/>
            <person name="Churas C."/>
            <person name="Place M."/>
            <person name="Herschleb J."/>
            <person name="Runnheim R."/>
            <person name="Forrest D."/>
            <person name="Amos-Landgraf J."/>
            <person name="Schwartz D.C."/>
            <person name="Cheng Z."/>
            <person name="Lindblad-Toh K."/>
            <person name="Eichler E.E."/>
            <person name="Ponting C.P."/>
        </authorList>
    </citation>
    <scope>NUCLEOTIDE SEQUENCE [LARGE SCALE GENOMIC DNA]</scope>
    <source>
        <strain>C57BL/6J</strain>
    </source>
</reference>
<reference key="3">
    <citation type="journal article" date="2004" name="Genome Res.">
        <title>The status, quality, and expansion of the NIH full-length cDNA project: the Mammalian Gene Collection (MGC).</title>
        <authorList>
            <consortium name="The MGC Project Team"/>
        </authorList>
    </citation>
    <scope>NUCLEOTIDE SEQUENCE [LARGE SCALE MRNA]</scope>
    <source>
        <strain>C57BL/6J</strain>
        <strain>FVB/N</strain>
        <tissue>Eye</tissue>
        <tissue>Kidney</tissue>
    </source>
</reference>
<reference key="4">
    <citation type="journal article" date="2006" name="Gene Expr. Patterns">
        <title>High-throughput screen for genes predominantly expressed in the ICM of mouse blastocysts by whole mount in situ hybridization.</title>
        <authorList>
            <person name="Yoshikawa T."/>
            <person name="Piao Y."/>
            <person name="Zhong J."/>
            <person name="Matoba R."/>
            <person name="Carter M.G."/>
            <person name="Wang Y."/>
            <person name="Goldberg I."/>
            <person name="Ko M.S."/>
        </authorList>
    </citation>
    <scope>DEVELOPMENTAL STAGE</scope>
</reference>
<reference key="5">
    <citation type="journal article" date="2014" name="PLoS Genet.">
        <title>Zfp322a Regulates mouse ES cell pluripotency and enhances reprogramming efficiency.</title>
        <authorList>
            <person name="Ma H."/>
            <person name="Ng H.M."/>
            <person name="Teh X."/>
            <person name="Li H."/>
            <person name="Lee Y.H."/>
            <person name="Chong Y.M."/>
            <person name="Loh Y.H."/>
            <person name="Collins J.J."/>
            <person name="Feng B."/>
            <person name="Yang H."/>
            <person name="Wu Q."/>
        </authorList>
    </citation>
    <scope>FUNCTION</scope>
    <scope>INTERACTION WITH POU5F1</scope>
    <scope>SUBCELLULAR LOCATION</scope>
</reference>
<proteinExistence type="evidence at protein level"/>
<comment type="function">
    <text evidence="4">Transcriptional activator. Important for maintenance of pluripotency in embryonic stem cells. Binds directly to the POU5F1 distal enhancer and the NANOG proximal promoter, and enhances expression of both genes. Can also bind to numerous other gene promoters and regulates expression of many other pluripotency factors, either directly or indirectly. Promotes inhibition of MAPK signaling during embryonic stem cell differentiation.</text>
</comment>
<comment type="subunit">
    <text evidence="4">Interacts with POU5F1.</text>
</comment>
<comment type="subcellular location">
    <subcellularLocation>
        <location evidence="4">Nucleus</location>
    </subcellularLocation>
    <subcellularLocation>
        <location evidence="4">Cytoplasm</location>
    </subcellularLocation>
    <text evidence="4">Mainly found in the nucleus.</text>
</comment>
<comment type="developmental stage">
    <text evidence="3">Expressed in the inner cell mass of the blastocyst during preimplantation stage embryonic development.</text>
</comment>
<comment type="miscellaneous">
    <text evidence="4">Significantly enhances POU5F1/OCT4-SOX2-KLF4-MYC (OSKM) mediated reprogramming of mouse embryonic fibroblasts into induced pluripotent stem cells, and can also substitute for SOX2 in this process.</text>
</comment>
<comment type="similarity">
    <text evidence="5">Belongs to the krueppel C2H2-type zinc-finger protein family.</text>
</comment>
<comment type="sequence caution" evidence="5">
    <conflict type="erroneous initiation">
        <sequence resource="EMBL-CDS" id="AAH32268"/>
    </conflict>
    <text>Extended N-terminus.</text>
</comment>
<feature type="chain" id="PRO_0000047531" description="Zinc finger protein 322">
    <location>
        <begin position="1"/>
        <end position="410"/>
    </location>
</feature>
<feature type="zinc finger region" description="C2H2-type 1" evidence="2">
    <location>
        <begin position="81"/>
        <end position="103"/>
    </location>
</feature>
<feature type="zinc finger region" description="C2H2-type 2" evidence="2">
    <location>
        <begin position="109"/>
        <end position="131"/>
    </location>
</feature>
<feature type="zinc finger region" description="C2H2-type 3" evidence="2">
    <location>
        <begin position="137"/>
        <end position="159"/>
    </location>
</feature>
<feature type="zinc finger region" description="C2H2-type 4" evidence="2">
    <location>
        <begin position="165"/>
        <end position="187"/>
    </location>
</feature>
<feature type="zinc finger region" description="C2H2-type 5" evidence="2">
    <location>
        <begin position="193"/>
        <end position="215"/>
    </location>
</feature>
<feature type="zinc finger region" description="C2H2-type 6" evidence="2">
    <location>
        <begin position="221"/>
        <end position="243"/>
    </location>
</feature>
<feature type="zinc finger region" description="C2H2-type 7" evidence="2">
    <location>
        <begin position="249"/>
        <end position="271"/>
    </location>
</feature>
<feature type="zinc finger region" description="C2H2-type 8" evidence="2">
    <location>
        <begin position="277"/>
        <end position="299"/>
    </location>
</feature>
<feature type="zinc finger region" description="C2H2-type 9; degenerate" evidence="2">
    <location>
        <begin position="303"/>
        <end position="325"/>
    </location>
</feature>
<feature type="zinc finger region" description="C2H2-type 10; degenerate" evidence="2">
    <location>
        <begin position="361"/>
        <end position="383"/>
    </location>
</feature>
<feature type="modified residue" description="Phosphoserine" evidence="1">
    <location>
        <position position="400"/>
    </location>
</feature>
<feature type="sequence conflict" description="In Ref. 3; AAH32268." evidence="5" ref="3">
    <original>M</original>
    <variation>V</variation>
    <location>
        <position position="1"/>
    </location>
</feature>
<organism>
    <name type="scientific">Mus musculus</name>
    <name type="common">Mouse</name>
    <dbReference type="NCBI Taxonomy" id="10090"/>
    <lineage>
        <taxon>Eukaryota</taxon>
        <taxon>Metazoa</taxon>
        <taxon>Chordata</taxon>
        <taxon>Craniata</taxon>
        <taxon>Vertebrata</taxon>
        <taxon>Euteleostomi</taxon>
        <taxon>Mammalia</taxon>
        <taxon>Eutheria</taxon>
        <taxon>Euarchontoglires</taxon>
        <taxon>Glires</taxon>
        <taxon>Rodentia</taxon>
        <taxon>Myomorpha</taxon>
        <taxon>Muroidea</taxon>
        <taxon>Muridae</taxon>
        <taxon>Murinae</taxon>
        <taxon>Mus</taxon>
        <taxon>Mus</taxon>
    </lineage>
</organism>
<dbReference type="EMBL" id="AK036302">
    <property type="protein sequence ID" value="BAC29377.1"/>
    <property type="molecule type" value="mRNA"/>
</dbReference>
<dbReference type="EMBL" id="AK162608">
    <property type="protein sequence ID" value="BAE36986.1"/>
    <property type="molecule type" value="mRNA"/>
</dbReference>
<dbReference type="EMBL" id="AK170525">
    <property type="protein sequence ID" value="BAE41858.1"/>
    <property type="molecule type" value="mRNA"/>
</dbReference>
<dbReference type="EMBL" id="AL669819">
    <property type="status" value="NOT_ANNOTATED_CDS"/>
    <property type="molecule type" value="Genomic_DNA"/>
</dbReference>
<dbReference type="EMBL" id="BC017143">
    <property type="protein sequence ID" value="AAH17143.1"/>
    <property type="molecule type" value="mRNA"/>
</dbReference>
<dbReference type="EMBL" id="BC032268">
    <property type="protein sequence ID" value="AAH32268.1"/>
    <property type="status" value="ALT_INIT"/>
    <property type="molecule type" value="mRNA"/>
</dbReference>
<dbReference type="EMBL" id="BC043711">
    <property type="protein sequence ID" value="AAH43711.1"/>
    <property type="molecule type" value="mRNA"/>
</dbReference>
<dbReference type="CCDS" id="CCDS26337.1"/>
<dbReference type="RefSeq" id="NP_001104577.1">
    <property type="nucleotide sequence ID" value="NM_001111107.2"/>
</dbReference>
<dbReference type="RefSeq" id="NP_001273084.1">
    <property type="nucleotide sequence ID" value="NM_001286155.1"/>
</dbReference>
<dbReference type="RefSeq" id="NP_001273085.1">
    <property type="nucleotide sequence ID" value="NM_001286156.1"/>
</dbReference>
<dbReference type="RefSeq" id="NP_766174.1">
    <property type="nucleotide sequence ID" value="NM_172586.4"/>
</dbReference>
<dbReference type="SMR" id="Q8BZ89"/>
<dbReference type="FunCoup" id="Q8BZ89">
    <property type="interactions" value="1511"/>
</dbReference>
<dbReference type="STRING" id="10090.ENSMUSP00000061524"/>
<dbReference type="iPTMnet" id="Q8BZ89"/>
<dbReference type="PhosphoSitePlus" id="Q8BZ89"/>
<dbReference type="PaxDb" id="10090-ENSMUSP00000061524"/>
<dbReference type="ProteomicsDB" id="275281"/>
<dbReference type="Antibodypedia" id="11103">
    <property type="antibodies" value="120 antibodies from 18 providers"/>
</dbReference>
<dbReference type="DNASU" id="218100"/>
<dbReference type="Ensembl" id="ENSMUST00000050101.9">
    <property type="protein sequence ID" value="ENSMUSP00000061524.3"/>
    <property type="gene ID" value="ENSMUSG00000046351.12"/>
</dbReference>
<dbReference type="GeneID" id="218100"/>
<dbReference type="KEGG" id="mmu:218100"/>
<dbReference type="UCSC" id="uc007ptn.3">
    <property type="organism name" value="mouse"/>
</dbReference>
<dbReference type="AGR" id="MGI:2442566"/>
<dbReference type="CTD" id="218100"/>
<dbReference type="MGI" id="MGI:2442566">
    <property type="gene designation" value="Zfp322a"/>
</dbReference>
<dbReference type="VEuPathDB" id="HostDB:ENSMUSG00000046351"/>
<dbReference type="eggNOG" id="KOG1721">
    <property type="taxonomic scope" value="Eukaryota"/>
</dbReference>
<dbReference type="GeneTree" id="ENSGT00940000162956"/>
<dbReference type="HOGENOM" id="CLU_002678_44_10_1"/>
<dbReference type="InParanoid" id="Q8BZ89"/>
<dbReference type="OMA" id="QIHQCLE"/>
<dbReference type="OrthoDB" id="6077919at2759"/>
<dbReference type="PhylomeDB" id="Q8BZ89"/>
<dbReference type="TreeFam" id="TF338126"/>
<dbReference type="BioGRID-ORCS" id="218100">
    <property type="hits" value="0 hits in 76 CRISPR screens"/>
</dbReference>
<dbReference type="ChiTaRS" id="Zfp322a">
    <property type="organism name" value="mouse"/>
</dbReference>
<dbReference type="PRO" id="PR:Q8BZ89"/>
<dbReference type="Proteomes" id="UP000000589">
    <property type="component" value="Chromosome 13"/>
</dbReference>
<dbReference type="RNAct" id="Q8BZ89">
    <property type="molecule type" value="protein"/>
</dbReference>
<dbReference type="Bgee" id="ENSMUSG00000046351">
    <property type="expression patterns" value="Expressed in embryonic post-anal tail and 272 other cell types or tissues"/>
</dbReference>
<dbReference type="ExpressionAtlas" id="Q8BZ89">
    <property type="expression patterns" value="baseline and differential"/>
</dbReference>
<dbReference type="GO" id="GO:0005813">
    <property type="term" value="C:centrosome"/>
    <property type="evidence" value="ECO:0007669"/>
    <property type="project" value="Ensembl"/>
</dbReference>
<dbReference type="GO" id="GO:0005737">
    <property type="term" value="C:cytoplasm"/>
    <property type="evidence" value="ECO:0000314"/>
    <property type="project" value="UniProtKB"/>
</dbReference>
<dbReference type="GO" id="GO:0005829">
    <property type="term" value="C:cytosol"/>
    <property type="evidence" value="ECO:0007669"/>
    <property type="project" value="Ensembl"/>
</dbReference>
<dbReference type="GO" id="GO:0005654">
    <property type="term" value="C:nucleoplasm"/>
    <property type="evidence" value="ECO:0007669"/>
    <property type="project" value="Ensembl"/>
</dbReference>
<dbReference type="GO" id="GO:0005634">
    <property type="term" value="C:nucleus"/>
    <property type="evidence" value="ECO:0000314"/>
    <property type="project" value="UniProtKB"/>
</dbReference>
<dbReference type="GO" id="GO:0000987">
    <property type="term" value="F:cis-regulatory region sequence-specific DNA binding"/>
    <property type="evidence" value="ECO:0000314"/>
    <property type="project" value="UniProtKB"/>
</dbReference>
<dbReference type="GO" id="GO:0003700">
    <property type="term" value="F:DNA-binding transcription factor activity"/>
    <property type="evidence" value="ECO:0000314"/>
    <property type="project" value="UniProtKB"/>
</dbReference>
<dbReference type="GO" id="GO:0008270">
    <property type="term" value="F:zinc ion binding"/>
    <property type="evidence" value="ECO:0007669"/>
    <property type="project" value="UniProtKB-KW"/>
</dbReference>
<dbReference type="GO" id="GO:1902459">
    <property type="term" value="P:positive regulation of stem cell population maintenance"/>
    <property type="evidence" value="ECO:0000314"/>
    <property type="project" value="UniProtKB"/>
</dbReference>
<dbReference type="GO" id="GO:0006355">
    <property type="term" value="P:regulation of DNA-templated transcription"/>
    <property type="evidence" value="ECO:0000314"/>
    <property type="project" value="UniProtKB"/>
</dbReference>
<dbReference type="FunFam" id="3.30.160.60:FF:002988">
    <property type="entry name" value="RCG45242, isoform CRA_a"/>
    <property type="match status" value="1"/>
</dbReference>
<dbReference type="FunFam" id="3.30.160.60:FF:000540">
    <property type="entry name" value="zinc finger protein 263 isoform X1"/>
    <property type="match status" value="1"/>
</dbReference>
<dbReference type="FunFam" id="3.30.160.60:FF:000269">
    <property type="entry name" value="Zinc finger protein 287"/>
    <property type="match status" value="1"/>
</dbReference>
<dbReference type="FunFam" id="3.30.160.60:FF:002323">
    <property type="entry name" value="Zinc finger protein 322"/>
    <property type="match status" value="1"/>
</dbReference>
<dbReference type="FunFam" id="3.30.160.60:FF:002339">
    <property type="entry name" value="Zinc finger protein 322"/>
    <property type="match status" value="1"/>
</dbReference>
<dbReference type="FunFam" id="3.30.160.60:FF:003317">
    <property type="entry name" value="Zinc finger protein 322"/>
    <property type="match status" value="1"/>
</dbReference>
<dbReference type="FunFam" id="3.30.160.60:FF:002343">
    <property type="entry name" value="Zinc finger protein 33A"/>
    <property type="match status" value="1"/>
</dbReference>
<dbReference type="FunFam" id="3.30.160.60:FF:000848">
    <property type="entry name" value="Zinc finger protein 35"/>
    <property type="match status" value="2"/>
</dbReference>
<dbReference type="FunFam" id="3.30.160.60:FF:001468">
    <property type="entry name" value="Zinc finger protein 672"/>
    <property type="match status" value="1"/>
</dbReference>
<dbReference type="Gene3D" id="3.30.160.60">
    <property type="entry name" value="Classic Zinc Finger"/>
    <property type="match status" value="10"/>
</dbReference>
<dbReference type="InterPro" id="IPR036236">
    <property type="entry name" value="Znf_C2H2_sf"/>
</dbReference>
<dbReference type="InterPro" id="IPR013087">
    <property type="entry name" value="Znf_C2H2_type"/>
</dbReference>
<dbReference type="PANTHER" id="PTHR24381">
    <property type="entry name" value="ZINC FINGER PROTEIN"/>
    <property type="match status" value="1"/>
</dbReference>
<dbReference type="PANTHER" id="PTHR24381:SF390">
    <property type="entry name" value="ZINC FINGER PROTEIN 37 HOMOLOG"/>
    <property type="match status" value="1"/>
</dbReference>
<dbReference type="Pfam" id="PF00096">
    <property type="entry name" value="zf-C2H2"/>
    <property type="match status" value="7"/>
</dbReference>
<dbReference type="SMART" id="SM00355">
    <property type="entry name" value="ZnF_C2H2"/>
    <property type="match status" value="10"/>
</dbReference>
<dbReference type="SUPFAM" id="SSF57667">
    <property type="entry name" value="beta-beta-alpha zinc fingers"/>
    <property type="match status" value="6"/>
</dbReference>
<dbReference type="PROSITE" id="PS00028">
    <property type="entry name" value="ZINC_FINGER_C2H2_1"/>
    <property type="match status" value="8"/>
</dbReference>
<dbReference type="PROSITE" id="PS50157">
    <property type="entry name" value="ZINC_FINGER_C2H2_2"/>
    <property type="match status" value="10"/>
</dbReference>
<protein>
    <recommendedName>
        <fullName>Zinc finger protein 322</fullName>
    </recommendedName>
    <alternativeName>
        <fullName>Zinc finger protein 322A</fullName>
    </alternativeName>
</protein>
<evidence type="ECO:0000250" key="1">
    <source>
        <dbReference type="UniProtKB" id="Q6U7Q0"/>
    </source>
</evidence>
<evidence type="ECO:0000255" key="2">
    <source>
        <dbReference type="PROSITE-ProRule" id="PRU00042"/>
    </source>
</evidence>
<evidence type="ECO:0000269" key="3">
    <source>
    </source>
</evidence>
<evidence type="ECO:0000269" key="4">
    <source>
    </source>
</evidence>
<evidence type="ECO:0000305" key="5"/>
<gene>
    <name type="primary">Znf322</name>
    <name type="synonym">Zfp322a</name>
    <name type="synonym">Znf322a</name>
</gene>
<name>ZN322_MOUSE</name>
<keyword id="KW-0010">Activator</keyword>
<keyword id="KW-0963">Cytoplasm</keyword>
<keyword id="KW-0238">DNA-binding</keyword>
<keyword id="KW-0479">Metal-binding</keyword>
<keyword id="KW-0539">Nucleus</keyword>
<keyword id="KW-0597">Phosphoprotein</keyword>
<keyword id="KW-1185">Reference proteome</keyword>
<keyword id="KW-0677">Repeat</keyword>
<keyword id="KW-0804">Transcription</keyword>
<keyword id="KW-0805">Transcription regulation</keyword>
<keyword id="KW-0862">Zinc</keyword>
<keyword id="KW-0863">Zinc-finger</keyword>
<accession>Q8BZ89</accession>
<accession>Q8K0A0</accession>
<accession>Q91W42</accession>